<name>CKLF5_HUMAN</name>
<evidence type="ECO:0000255" key="1"/>
<evidence type="ECO:0000255" key="2">
    <source>
        <dbReference type="PROSITE-ProRule" id="PRU00581"/>
    </source>
</evidence>
<evidence type="ECO:0000269" key="3">
    <source>
    </source>
</evidence>
<evidence type="ECO:0000303" key="4">
    <source>
    </source>
</evidence>
<evidence type="ECO:0000303" key="5">
    <source>
    </source>
</evidence>
<evidence type="ECO:0000303" key="6">
    <source ref="2"/>
</evidence>
<evidence type="ECO:0000305" key="7"/>
<organism>
    <name type="scientific">Homo sapiens</name>
    <name type="common">Human</name>
    <dbReference type="NCBI Taxonomy" id="9606"/>
    <lineage>
        <taxon>Eukaryota</taxon>
        <taxon>Metazoa</taxon>
        <taxon>Chordata</taxon>
        <taxon>Craniata</taxon>
        <taxon>Vertebrata</taxon>
        <taxon>Euteleostomi</taxon>
        <taxon>Mammalia</taxon>
        <taxon>Eutheria</taxon>
        <taxon>Euarchontoglires</taxon>
        <taxon>Primates</taxon>
        <taxon>Haplorrhini</taxon>
        <taxon>Catarrhini</taxon>
        <taxon>Hominidae</taxon>
        <taxon>Homo</taxon>
    </lineage>
</organism>
<reference key="1">
    <citation type="journal article" date="2003" name="Genomics">
        <title>Identification of eight genes encoding chemokine-like factor superfamily members 1-8 (CKLFSF1-8) by in silico cloning and experimental validation.</title>
        <authorList>
            <person name="Han W."/>
            <person name="Ding P."/>
            <person name="Xu M."/>
            <person name="Wang L."/>
            <person name="Rui M."/>
            <person name="Shi S."/>
            <person name="Liu Y."/>
            <person name="Zheng Y."/>
            <person name="Chen Y."/>
            <person name="Yang T."/>
            <person name="Ma D."/>
        </authorList>
    </citation>
    <scope>NUCLEOTIDE SEQUENCE [MRNA] (ISOFORMS 2 AND 6)</scope>
    <scope>TISSUE SPECIFICITY</scope>
    <source>
        <tissue>Brain</tissue>
    </source>
</reference>
<reference key="2">
    <citation type="submission" date="2002-07" db="EMBL/GenBank/DDBJ databases">
        <authorList>
            <person name="Shi S."/>
            <person name="Han W."/>
            <person name="Ding P."/>
            <person name="Yang T."/>
            <person name="Song Q."/>
            <person name="Zhang Y."/>
            <person name="Ma D."/>
        </authorList>
    </citation>
    <scope>NUCLEOTIDE SEQUENCE [MRNA] (ISOFORMS 1; 3; 4 AND 5)</scope>
    <source>
        <tissue>Brain</tissue>
        <tissue>Pancreas</tissue>
        <tissue>Prostatic carcinoma</tissue>
    </source>
</reference>
<reference key="3">
    <citation type="journal article" date="2003" name="Nature">
        <title>The DNA sequence and analysis of human chromosome 14.</title>
        <authorList>
            <person name="Heilig R."/>
            <person name="Eckenberg R."/>
            <person name="Petit J.-L."/>
            <person name="Fonknechten N."/>
            <person name="Da Silva C."/>
            <person name="Cattolico L."/>
            <person name="Levy M."/>
            <person name="Barbe V."/>
            <person name="De Berardinis V."/>
            <person name="Ureta-Vidal A."/>
            <person name="Pelletier E."/>
            <person name="Vico V."/>
            <person name="Anthouard V."/>
            <person name="Rowen L."/>
            <person name="Madan A."/>
            <person name="Qin S."/>
            <person name="Sun H."/>
            <person name="Du H."/>
            <person name="Pepin K."/>
            <person name="Artiguenave F."/>
            <person name="Robert C."/>
            <person name="Cruaud C."/>
            <person name="Bruels T."/>
            <person name="Jaillon O."/>
            <person name="Friedlander L."/>
            <person name="Samson G."/>
            <person name="Brottier P."/>
            <person name="Cure S."/>
            <person name="Segurens B."/>
            <person name="Aniere F."/>
            <person name="Samain S."/>
            <person name="Crespeau H."/>
            <person name="Abbasi N."/>
            <person name="Aiach N."/>
            <person name="Boscus D."/>
            <person name="Dickhoff R."/>
            <person name="Dors M."/>
            <person name="Dubois I."/>
            <person name="Friedman C."/>
            <person name="Gouyvenoux M."/>
            <person name="James R."/>
            <person name="Madan A."/>
            <person name="Mairey-Estrada B."/>
            <person name="Mangenot S."/>
            <person name="Martins N."/>
            <person name="Menard M."/>
            <person name="Oztas S."/>
            <person name="Ratcliffe A."/>
            <person name="Shaffer T."/>
            <person name="Trask B."/>
            <person name="Vacherie B."/>
            <person name="Bellemere C."/>
            <person name="Belser C."/>
            <person name="Besnard-Gonnet M."/>
            <person name="Bartol-Mavel D."/>
            <person name="Boutard M."/>
            <person name="Briez-Silla S."/>
            <person name="Combette S."/>
            <person name="Dufosse-Laurent V."/>
            <person name="Ferron C."/>
            <person name="Lechaplais C."/>
            <person name="Louesse C."/>
            <person name="Muselet D."/>
            <person name="Magdelenat G."/>
            <person name="Pateau E."/>
            <person name="Petit E."/>
            <person name="Sirvain-Trukniewicz P."/>
            <person name="Trybou A."/>
            <person name="Vega-Czarny N."/>
            <person name="Bataille E."/>
            <person name="Bluet E."/>
            <person name="Bordelais I."/>
            <person name="Dubois M."/>
            <person name="Dumont C."/>
            <person name="Guerin T."/>
            <person name="Haffray S."/>
            <person name="Hammadi R."/>
            <person name="Muanga J."/>
            <person name="Pellouin V."/>
            <person name="Robert D."/>
            <person name="Wunderle E."/>
            <person name="Gauguet G."/>
            <person name="Roy A."/>
            <person name="Sainte-Marthe L."/>
            <person name="Verdier J."/>
            <person name="Verdier-Discala C."/>
            <person name="Hillier L.W."/>
            <person name="Fulton L."/>
            <person name="McPherson J."/>
            <person name="Matsuda F."/>
            <person name="Wilson R."/>
            <person name="Scarpelli C."/>
            <person name="Gyapay G."/>
            <person name="Wincker P."/>
            <person name="Saurin W."/>
            <person name="Quetier F."/>
            <person name="Waterston R."/>
            <person name="Hood L."/>
            <person name="Weissenbach J."/>
        </authorList>
    </citation>
    <scope>NUCLEOTIDE SEQUENCE [LARGE SCALE GENOMIC DNA]</scope>
</reference>
<reference key="4">
    <citation type="journal article" date="2004" name="Genome Res.">
        <title>The status, quality, and expansion of the NIH full-length cDNA project: the Mammalian Gene Collection (MGC).</title>
        <authorList>
            <consortium name="The MGC Project Team"/>
        </authorList>
    </citation>
    <scope>NUCLEOTIDE SEQUENCE [LARGE SCALE MRNA] (ISOFORM 2)</scope>
    <source>
        <tissue>Brain</tissue>
    </source>
</reference>
<feature type="chain" id="PRO_0000186105" description="CKLF-like MARVEL transmembrane domain-containing protein 5">
    <location>
        <begin position="1"/>
        <end position="223"/>
    </location>
</feature>
<feature type="transmembrane region" description="Helical" evidence="1">
    <location>
        <begin position="35"/>
        <end position="55"/>
    </location>
</feature>
<feature type="transmembrane region" description="Helical" evidence="1">
    <location>
        <begin position="56"/>
        <end position="76"/>
    </location>
</feature>
<feature type="transmembrane region" description="Helical" evidence="1">
    <location>
        <begin position="162"/>
        <end position="182"/>
    </location>
</feature>
<feature type="transmembrane region" description="Helical" evidence="1">
    <location>
        <begin position="186"/>
        <end position="206"/>
    </location>
</feature>
<feature type="domain" description="MARVEL" evidence="2">
    <location>
        <begin position="29"/>
        <end position="213"/>
    </location>
</feature>
<feature type="splice variant" id="VSP_008264" description="In isoform 4." evidence="6">
    <location>
        <begin position="43"/>
        <end position="191"/>
    </location>
</feature>
<feature type="splice variant" id="VSP_008263" description="In isoform 5." evidence="6">
    <location>
        <begin position="43"/>
        <end position="160"/>
    </location>
</feature>
<feature type="splice variant" id="VSP_008262" description="In isoform 3." evidence="6">
    <original>ALTLIIFICFTASISAYMAAALLEFFITLAFLFLYATQY</original>
    <variation>D</variation>
    <location>
        <begin position="43"/>
        <end position="81"/>
    </location>
</feature>
<feature type="splice variant" id="VSP_047120" description="In isoform 6." evidence="4">
    <location>
        <begin position="94"/>
        <end position="191"/>
    </location>
</feature>
<feature type="splice variant" id="VSP_008265" description="In isoform 2 and isoform 3." evidence="4 5 6">
    <location>
        <begin position="94"/>
        <end position="160"/>
    </location>
</feature>
<feature type="sequence conflict" description="In Ref. 1; AAV69870." evidence="7" ref="1">
    <original>V</original>
    <variation>D</variation>
    <location>
        <position position="192"/>
    </location>
</feature>
<sequence>MLSARDRRDRHPEEGVVAELQGFAVDKAFLTSHKGILLETELALTLIIFICFTASISAYMAAALLEFFITLAFLFLYATQYYQRFDRINWPCLLQGHGQSGGPHPLDLLSHSAKVQPQPWPGLTPPGWHTPAAVPWVPAPAPGFWSWLLWFICFHSLGSSDFLRCVSAIIIFLVVSFAAVTSRDGAAIAAFVFGIILVSIFAYDAFKIYRTEMAPGASQGDQQ</sequence>
<gene>
    <name type="primary">CMTM5</name>
    <name type="synonym">CKLFSF5</name>
</gene>
<accession>Q96DZ9</accession>
<accession>E9PH91</accession>
<accession>Q5PY48</accession>
<protein>
    <recommendedName>
        <fullName>CKLF-like MARVEL transmembrane domain-containing protein 5</fullName>
    </recommendedName>
    <alternativeName>
        <fullName>Chemokine-like factor superfamily member 5</fullName>
    </alternativeName>
</protein>
<keyword id="KW-0025">Alternative splicing</keyword>
<keyword id="KW-0145">Chemotaxis</keyword>
<keyword id="KW-0202">Cytokine</keyword>
<keyword id="KW-0472">Membrane</keyword>
<keyword id="KW-1267">Proteomics identification</keyword>
<keyword id="KW-1185">Reference proteome</keyword>
<keyword id="KW-0812">Transmembrane</keyword>
<keyword id="KW-1133">Transmembrane helix</keyword>
<dbReference type="EMBL" id="AF479262">
    <property type="protein sequence ID" value="AAN73040.1"/>
    <property type="molecule type" value="mRNA"/>
</dbReference>
<dbReference type="EMBL" id="AY820135">
    <property type="protein sequence ID" value="AAV69870.1"/>
    <property type="molecule type" value="mRNA"/>
</dbReference>
<dbReference type="EMBL" id="AF527413">
    <property type="protein sequence ID" value="AAQ08985.1"/>
    <property type="molecule type" value="mRNA"/>
</dbReference>
<dbReference type="EMBL" id="AF527414">
    <property type="protein sequence ID" value="AAQ08986.1"/>
    <property type="molecule type" value="mRNA"/>
</dbReference>
<dbReference type="EMBL" id="AF527948">
    <property type="protein sequence ID" value="AAQ09008.2"/>
    <property type="molecule type" value="mRNA"/>
</dbReference>
<dbReference type="EMBL" id="AF527949">
    <property type="protein sequence ID" value="AAQ09009.1"/>
    <property type="molecule type" value="mRNA"/>
</dbReference>
<dbReference type="EMBL" id="AL049829">
    <property type="status" value="NOT_ANNOTATED_CDS"/>
    <property type="molecule type" value="Genomic_DNA"/>
</dbReference>
<dbReference type="EMBL" id="BC013109">
    <property type="protein sequence ID" value="AAH13109.1"/>
    <property type="molecule type" value="mRNA"/>
</dbReference>
<dbReference type="CCDS" id="CCDS32050.1">
    <molecule id="Q96DZ9-6"/>
</dbReference>
<dbReference type="CCDS" id="CCDS73617.1">
    <molecule id="Q96DZ9-1"/>
</dbReference>
<dbReference type="CCDS" id="CCDS73618.1">
    <molecule id="Q96DZ9-5"/>
</dbReference>
<dbReference type="CCDS" id="CCDS73619.1">
    <molecule id="Q96DZ9-4"/>
</dbReference>
<dbReference type="CCDS" id="CCDS9598.1">
    <molecule id="Q96DZ9-2"/>
</dbReference>
<dbReference type="RefSeq" id="NP_001032365.1">
    <molecule id="Q96DZ9-6"/>
    <property type="nucleotide sequence ID" value="NM_001037288.2"/>
</dbReference>
<dbReference type="RefSeq" id="NP_001275673.1">
    <molecule id="Q96DZ9-5"/>
    <property type="nucleotide sequence ID" value="NM_001288744.2"/>
</dbReference>
<dbReference type="RefSeq" id="NP_001275674.1">
    <molecule id="Q96DZ9-4"/>
    <property type="nucleotide sequence ID" value="NM_001288745.2"/>
</dbReference>
<dbReference type="RefSeq" id="NP_001275675.1">
    <molecule id="Q96DZ9-1"/>
    <property type="nucleotide sequence ID" value="NM_001288746.2"/>
</dbReference>
<dbReference type="RefSeq" id="NP_612469.1">
    <molecule id="Q96DZ9-2"/>
    <property type="nucleotide sequence ID" value="NM_138460.3"/>
</dbReference>
<dbReference type="RefSeq" id="XP_016876442.1">
    <property type="nucleotide sequence ID" value="XM_017020953.1"/>
</dbReference>
<dbReference type="RefSeq" id="XP_016876443.1">
    <property type="nucleotide sequence ID" value="XM_017020954.1"/>
</dbReference>
<dbReference type="RefSeq" id="XP_047286862.1">
    <molecule id="Q96DZ9-2"/>
    <property type="nucleotide sequence ID" value="XM_047430906.1"/>
</dbReference>
<dbReference type="RefSeq" id="XP_047286863.1">
    <molecule id="Q96DZ9-2"/>
    <property type="nucleotide sequence ID" value="XM_047430907.1"/>
</dbReference>
<dbReference type="RefSeq" id="XP_054231301.1">
    <molecule id="Q96DZ9-2"/>
    <property type="nucleotide sequence ID" value="XM_054375326.1"/>
</dbReference>
<dbReference type="RefSeq" id="XP_054231302.1">
    <molecule id="Q96DZ9-2"/>
    <property type="nucleotide sequence ID" value="XM_054375327.1"/>
</dbReference>
<dbReference type="SMR" id="Q96DZ9"/>
<dbReference type="BioGRID" id="125486">
    <property type="interactions" value="334"/>
</dbReference>
<dbReference type="FunCoup" id="Q96DZ9">
    <property type="interactions" value="8"/>
</dbReference>
<dbReference type="IntAct" id="Q96DZ9">
    <property type="interactions" value="238"/>
</dbReference>
<dbReference type="MINT" id="Q96DZ9"/>
<dbReference type="STRING" id="9606.ENSP00000344819"/>
<dbReference type="TCDB" id="1.A.64.5.8">
    <property type="family name" value="the plasmolipin (plasmolipin) family"/>
</dbReference>
<dbReference type="PhosphoSitePlus" id="Q96DZ9"/>
<dbReference type="SwissPalm" id="Q96DZ9"/>
<dbReference type="BioMuta" id="CMTM5"/>
<dbReference type="DMDM" id="34922025"/>
<dbReference type="MassIVE" id="Q96DZ9"/>
<dbReference type="PaxDb" id="9606-ENSP00000344819"/>
<dbReference type="PeptideAtlas" id="Q96DZ9"/>
<dbReference type="ProteomicsDB" id="20482"/>
<dbReference type="ProteomicsDB" id="76348">
    <molecule id="Q96DZ9-1"/>
</dbReference>
<dbReference type="ProteomicsDB" id="76349">
    <molecule id="Q96DZ9-2"/>
</dbReference>
<dbReference type="ProteomicsDB" id="76350">
    <molecule id="Q96DZ9-3"/>
</dbReference>
<dbReference type="ProteomicsDB" id="76351">
    <molecule id="Q96DZ9-4"/>
</dbReference>
<dbReference type="ProteomicsDB" id="76352">
    <molecule id="Q96DZ9-5"/>
</dbReference>
<dbReference type="Antibodypedia" id="22460">
    <property type="antibodies" value="226 antibodies from 26 providers"/>
</dbReference>
<dbReference type="DNASU" id="116173"/>
<dbReference type="Ensembl" id="ENST00000339180.9">
    <molecule id="Q96DZ9-1"/>
    <property type="protein sequence ID" value="ENSP00000344819.4"/>
    <property type="gene ID" value="ENSG00000166091.21"/>
</dbReference>
<dbReference type="Ensembl" id="ENST00000342473.8">
    <molecule id="Q96DZ9-4"/>
    <property type="protein sequence ID" value="ENSP00000344160.4"/>
    <property type="gene ID" value="ENSG00000166091.21"/>
</dbReference>
<dbReference type="Ensembl" id="ENST00000359320.7">
    <molecule id="Q96DZ9-2"/>
    <property type="protein sequence ID" value="ENSP00000352270.3"/>
    <property type="gene ID" value="ENSG00000166091.21"/>
</dbReference>
<dbReference type="Ensembl" id="ENST00000382809.2">
    <molecule id="Q96DZ9-6"/>
    <property type="protein sequence ID" value="ENSP00000372259.2"/>
    <property type="gene ID" value="ENSG00000166091.21"/>
</dbReference>
<dbReference type="Ensembl" id="ENST00000397227.7">
    <molecule id="Q96DZ9-5"/>
    <property type="protein sequence ID" value="ENSP00000380404.3"/>
    <property type="gene ID" value="ENSG00000166091.21"/>
</dbReference>
<dbReference type="Ensembl" id="ENST00000649278.1">
    <molecule id="Q96DZ9-2"/>
    <property type="protein sequence ID" value="ENSP00000497215.1"/>
    <property type="gene ID" value="ENSG00000166091.21"/>
</dbReference>
<dbReference type="GeneID" id="116173"/>
<dbReference type="KEGG" id="hsa:116173"/>
<dbReference type="MANE-Select" id="ENST00000339180.9">
    <property type="protein sequence ID" value="ENSP00000344819.4"/>
    <property type="RefSeq nucleotide sequence ID" value="NM_001288746.2"/>
    <property type="RefSeq protein sequence ID" value="NP_001275675.1"/>
</dbReference>
<dbReference type="UCSC" id="uc001wjs.3">
    <molecule id="Q96DZ9-1"/>
    <property type="organism name" value="human"/>
</dbReference>
<dbReference type="AGR" id="HGNC:19176"/>
<dbReference type="CTD" id="116173"/>
<dbReference type="DisGeNET" id="116173"/>
<dbReference type="GeneCards" id="CMTM5"/>
<dbReference type="HGNC" id="HGNC:19176">
    <property type="gene designation" value="CMTM5"/>
</dbReference>
<dbReference type="HPA" id="ENSG00000166091">
    <property type="expression patterns" value="Tissue enriched (brain)"/>
</dbReference>
<dbReference type="MIM" id="607888">
    <property type="type" value="gene"/>
</dbReference>
<dbReference type="neXtProt" id="NX_Q96DZ9"/>
<dbReference type="OpenTargets" id="ENSG00000166091"/>
<dbReference type="PharmGKB" id="PA38815"/>
<dbReference type="VEuPathDB" id="HostDB:ENSG00000166091"/>
<dbReference type="eggNOG" id="KOG4788">
    <property type="taxonomic scope" value="Eukaryota"/>
</dbReference>
<dbReference type="GeneTree" id="ENSGT00940000161867"/>
<dbReference type="HOGENOM" id="CLU_108546_0_0_1"/>
<dbReference type="InParanoid" id="Q96DZ9"/>
<dbReference type="OMA" id="WHTPAAV"/>
<dbReference type="OrthoDB" id="10028364at2759"/>
<dbReference type="PAN-GO" id="Q96DZ9">
    <property type="GO annotations" value="1 GO annotation based on evolutionary models"/>
</dbReference>
<dbReference type="PhylomeDB" id="Q96DZ9"/>
<dbReference type="TreeFam" id="TF317387"/>
<dbReference type="PathwayCommons" id="Q96DZ9"/>
<dbReference type="SignaLink" id="Q96DZ9"/>
<dbReference type="BioGRID-ORCS" id="116173">
    <property type="hits" value="6 hits in 1138 CRISPR screens"/>
</dbReference>
<dbReference type="GenomeRNAi" id="116173"/>
<dbReference type="Pharos" id="Q96DZ9">
    <property type="development level" value="Tbio"/>
</dbReference>
<dbReference type="PRO" id="PR:Q96DZ9"/>
<dbReference type="Proteomes" id="UP000005640">
    <property type="component" value="Chromosome 14"/>
</dbReference>
<dbReference type="RNAct" id="Q96DZ9">
    <property type="molecule type" value="protein"/>
</dbReference>
<dbReference type="Bgee" id="ENSG00000166091">
    <property type="expression patterns" value="Expressed in C1 segment of cervical spinal cord and 128 other cell types or tissues"/>
</dbReference>
<dbReference type="ExpressionAtlas" id="Q96DZ9">
    <property type="expression patterns" value="baseline and differential"/>
</dbReference>
<dbReference type="GO" id="GO:0005615">
    <property type="term" value="C:extracellular space"/>
    <property type="evidence" value="ECO:0007669"/>
    <property type="project" value="UniProtKB-KW"/>
</dbReference>
<dbReference type="GO" id="GO:0016020">
    <property type="term" value="C:membrane"/>
    <property type="evidence" value="ECO:0000318"/>
    <property type="project" value="GO_Central"/>
</dbReference>
<dbReference type="GO" id="GO:0005125">
    <property type="term" value="F:cytokine activity"/>
    <property type="evidence" value="ECO:0007669"/>
    <property type="project" value="UniProtKB-KW"/>
</dbReference>
<dbReference type="GO" id="GO:0006935">
    <property type="term" value="P:chemotaxis"/>
    <property type="evidence" value="ECO:0007669"/>
    <property type="project" value="UniProtKB-KW"/>
</dbReference>
<dbReference type="GO" id="GO:0045662">
    <property type="term" value="P:negative regulation of myoblast differentiation"/>
    <property type="evidence" value="ECO:0007669"/>
    <property type="project" value="Ensembl"/>
</dbReference>
<dbReference type="InterPro" id="IPR008253">
    <property type="entry name" value="Marvel"/>
</dbReference>
<dbReference type="InterPro" id="IPR050578">
    <property type="entry name" value="MARVEL-CKLF_proteins"/>
</dbReference>
<dbReference type="PANTHER" id="PTHR22776:SF26">
    <property type="entry name" value="CKLF-LIKE MARVEL TRANSMEMBRANE DOMAIN-CONTAINING PROTEIN 5"/>
    <property type="match status" value="1"/>
</dbReference>
<dbReference type="PANTHER" id="PTHR22776">
    <property type="entry name" value="MARVEL-CONTAINING POTENTIAL LIPID RAFT-ASSOCIATED PROTEIN"/>
    <property type="match status" value="1"/>
</dbReference>
<dbReference type="Pfam" id="PF01284">
    <property type="entry name" value="MARVEL"/>
    <property type="match status" value="1"/>
</dbReference>
<dbReference type="PROSITE" id="PS51225">
    <property type="entry name" value="MARVEL"/>
    <property type="match status" value="1"/>
</dbReference>
<comment type="interaction">
    <interactant intactId="EBI-2548702">
        <id>Q96DZ9</id>
    </interactant>
    <interactant intactId="EBI-10259474">
        <id>Q86V21</id>
        <label>AACS</label>
    </interactant>
    <organismsDiffer>false</organismsDiffer>
    <experiments>3</experiments>
</comment>
<comment type="interaction">
    <interactant intactId="EBI-2548702">
        <id>Q96DZ9</id>
    </interactant>
    <interactant intactId="EBI-2876502">
        <id>Q96CM8</id>
        <label>ACSF2</label>
    </interactant>
    <organismsDiffer>false</organismsDiffer>
    <experiments>5</experiments>
</comment>
<comment type="interaction">
    <interactant intactId="EBI-2548702">
        <id>Q96DZ9</id>
    </interactant>
    <interactant intactId="EBI-1210304">
        <id>P54886</id>
        <label>ALDH18A1</label>
    </interactant>
    <organismsDiffer>false</organismsDiffer>
    <experiments>3</experiments>
</comment>
<comment type="interaction">
    <interactant intactId="EBI-2548702">
        <id>Q96DZ9</id>
    </interactant>
    <interactant intactId="EBI-701692">
        <id>P02647</id>
        <label>APOA1</label>
    </interactant>
    <organismsDiffer>false</organismsDiffer>
    <experiments>3</experiments>
</comment>
<comment type="interaction">
    <interactant intactId="EBI-2548702">
        <id>Q96DZ9</id>
    </interactant>
    <interactant intactId="EBI-10256990">
        <id>Q7Z3E5-2</id>
        <label>ARMC9</label>
    </interactant>
    <organismsDiffer>false</organismsDiffer>
    <experiments>3</experiments>
</comment>
<comment type="interaction">
    <interactant intactId="EBI-2548702">
        <id>Q96DZ9</id>
    </interactant>
    <interactant intactId="EBI-10194262">
        <id>P04798</id>
        <label>CYP1A1</label>
    </interactant>
    <organismsDiffer>false</organismsDiffer>
    <experiments>3</experiments>
</comment>
<comment type="interaction">
    <interactant intactId="EBI-2548702">
        <id>Q96DZ9</id>
    </interactant>
    <interactant intactId="EBI-2510241">
        <id>Q9BW61</id>
        <label>DDA1</label>
    </interactant>
    <organismsDiffer>false</organismsDiffer>
    <experiments>3</experiments>
</comment>
<comment type="interaction">
    <interactant intactId="EBI-2548702">
        <id>Q96DZ9</id>
    </interactant>
    <interactant intactId="EBI-521451">
        <id>Q5VYK3</id>
        <label>ECPAS</label>
    </interactant>
    <organismsDiffer>false</organismsDiffer>
    <experiments>3</experiments>
</comment>
<comment type="interaction">
    <interactant intactId="EBI-2548702">
        <id>Q96DZ9</id>
    </interactant>
    <interactant intactId="EBI-3907816">
        <id>P54852</id>
        <label>EMP3</label>
    </interactant>
    <organismsDiffer>false</organismsDiffer>
    <experiments>3</experiments>
</comment>
<comment type="interaction">
    <interactant intactId="EBI-2548702">
        <id>Q96DZ9</id>
    </interactant>
    <interactant intactId="EBI-2686288">
        <id>Q8IWE2</id>
        <label>FAM114A1</label>
    </interactant>
    <organismsDiffer>false</organismsDiffer>
    <experiments>3</experiments>
</comment>
<comment type="interaction">
    <interactant intactId="EBI-2548702">
        <id>Q96DZ9</id>
    </interactant>
    <interactant intactId="EBI-2513774">
        <id>O95363</id>
        <label>FARS2</label>
    </interactant>
    <organismsDiffer>false</organismsDiffer>
    <experiments>3</experiments>
</comment>
<comment type="interaction">
    <interactant intactId="EBI-2548702">
        <id>Q96DZ9</id>
    </interactant>
    <interactant intactId="EBI-10209663">
        <id>Q8IVA8</id>
        <label>GAD1</label>
    </interactant>
    <organismsDiffer>false</organismsDiffer>
    <experiments>3</experiments>
</comment>
<comment type="interaction">
    <interactant intactId="EBI-2548702">
        <id>Q96DZ9</id>
    </interactant>
    <interactant intactId="EBI-743184">
        <id>Q99259</id>
        <label>GAD1</label>
    </interactant>
    <organismsDiffer>false</organismsDiffer>
    <experiments>4</experiments>
</comment>
<comment type="interaction">
    <interactant intactId="EBI-2548702">
        <id>Q96DZ9</id>
    </interactant>
    <interactant intactId="EBI-9304251">
        <id>Q05329</id>
        <label>GAD2</label>
    </interactant>
    <organismsDiffer>false</organismsDiffer>
    <experiments>3</experiments>
</comment>
<comment type="interaction">
    <interactant intactId="EBI-2548702">
        <id>Q96DZ9</id>
    </interactant>
    <interactant intactId="EBI-2859814">
        <id>Q9NZD2</id>
        <label>GLTP</label>
    </interactant>
    <organismsDiffer>false</organismsDiffer>
    <experiments>4</experiments>
</comment>
<comment type="interaction">
    <interactant intactId="EBI-2548702">
        <id>Q96DZ9</id>
    </interactant>
    <interactant intactId="EBI-357956">
        <id>Q12789</id>
        <label>GTF3C1</label>
    </interactant>
    <organismsDiffer>false</organismsDiffer>
    <experiments>3</experiments>
</comment>
<comment type="interaction">
    <interactant intactId="EBI-2548702">
        <id>Q96DZ9</id>
    </interactant>
    <interactant intactId="EBI-739696">
        <id>P25791</id>
        <label>LMO2</label>
    </interactant>
    <organismsDiffer>false</organismsDiffer>
    <experiments>3</experiments>
</comment>
<comment type="interaction">
    <interactant intactId="EBI-2548702">
        <id>Q96DZ9</id>
    </interactant>
    <interactant intactId="EBI-10292326">
        <id>Q96PE7</id>
        <label>MCEE</label>
    </interactant>
    <organismsDiffer>false</organismsDiffer>
    <experiments>4</experiments>
</comment>
<comment type="interaction">
    <interactant intactId="EBI-2548702">
        <id>Q96DZ9</id>
    </interactant>
    <interactant intactId="EBI-7825321">
        <id>Q96E29</id>
        <label>MTERF3</label>
    </interactant>
    <organismsDiffer>false</organismsDiffer>
    <experiments>3</experiments>
</comment>
<comment type="interaction">
    <interactant intactId="EBI-2548702">
        <id>Q96DZ9</id>
    </interactant>
    <interactant intactId="EBI-709754">
        <id>Q9HB07</id>
        <label>MYG1</label>
    </interactant>
    <organismsDiffer>false</organismsDiffer>
    <experiments>4</experiments>
</comment>
<comment type="interaction">
    <interactant intactId="EBI-2548702">
        <id>Q96DZ9</id>
    </interactant>
    <interactant intactId="EBI-10323810">
        <id>Q9ULP0</id>
        <label>NDRG4</label>
    </interactant>
    <organismsDiffer>false</organismsDiffer>
    <experiments>3</experiments>
</comment>
<comment type="interaction">
    <interactant intactId="EBI-2548702">
        <id>Q96DZ9</id>
    </interactant>
    <interactant intactId="EBI-749241">
        <id>Q9UKF7</id>
        <label>PITPNC1</label>
    </interactant>
    <organismsDiffer>false</organismsDiffer>
    <experiments>3</experiments>
</comment>
<comment type="interaction">
    <interactant intactId="EBI-2548702">
        <id>Q96DZ9</id>
    </interactant>
    <interactant intactId="EBI-725795">
        <id>O60664</id>
        <label>PLIN3</label>
    </interactant>
    <organismsDiffer>false</organismsDiffer>
    <experiments>3</experiments>
</comment>
<comment type="interaction">
    <interactant intactId="EBI-2548702">
        <id>Q96DZ9</id>
    </interactant>
    <interactant intactId="EBI-5544229">
        <id>P30405</id>
        <label>PPIF</label>
    </interactant>
    <organismsDiffer>false</organismsDiffer>
    <experiments>3</experiments>
</comment>
<comment type="interaction">
    <interactant intactId="EBI-2548702">
        <id>Q96DZ9</id>
    </interactant>
    <interactant intactId="EBI-2561661">
        <id>Q969Q6</id>
        <label>PPP2R3C</label>
    </interactant>
    <organismsDiffer>false</organismsDiffer>
    <experiments>3</experiments>
</comment>
<comment type="interaction">
    <interactant intactId="EBI-2548702">
        <id>Q96DZ9</id>
    </interactant>
    <interactant intactId="EBI-742898">
        <id>P43378</id>
        <label>PTPN9</label>
    </interactant>
    <organismsDiffer>false</organismsDiffer>
    <experiments>4</experiments>
</comment>
<comment type="interaction">
    <interactant intactId="EBI-2548702">
        <id>Q96DZ9</id>
    </interactant>
    <interactant intactId="EBI-10250413">
        <id>Q6IQ43</id>
        <label>PTPN9</label>
    </interactant>
    <organismsDiffer>false</organismsDiffer>
    <experiments>3</experiments>
</comment>
<comment type="interaction">
    <interactant intactId="EBI-2548702">
        <id>Q96DZ9</id>
    </interactant>
    <interactant intactId="EBI-3232108">
        <id>Q8N0V3</id>
        <label>RBFA</label>
    </interactant>
    <organismsDiffer>false</organismsDiffer>
    <experiments>3</experiments>
</comment>
<comment type="interaction">
    <interactant intactId="EBI-2548702">
        <id>Q96DZ9</id>
    </interactant>
    <interactant intactId="EBI-2806908">
        <id>Q96LZ7</id>
        <label>RMDN2</label>
    </interactant>
    <organismsDiffer>false</organismsDiffer>
    <experiments>3</experiments>
</comment>
<comment type="interaction">
    <interactant intactId="EBI-2548702">
        <id>Q96DZ9</id>
    </interactant>
    <interactant intactId="EBI-2340249">
        <id>Q96GF1</id>
        <label>RNF185</label>
    </interactant>
    <organismsDiffer>false</organismsDiffer>
    <experiments>3</experiments>
</comment>
<comment type="interaction">
    <interactant intactId="EBI-2548702">
        <id>Q96DZ9</id>
    </interactant>
    <interactant intactId="EBI-10256202">
        <id>Q7L4I2-2</id>
        <label>RSRC2</label>
    </interactant>
    <organismsDiffer>false</organismsDiffer>
    <experiments>3</experiments>
</comment>
<comment type="interaction">
    <interactant intactId="EBI-2548702">
        <id>Q96DZ9</id>
    </interactant>
    <interactant intactId="EBI-727004">
        <id>O00560</id>
        <label>SDCBP</label>
    </interactant>
    <organismsDiffer>false</organismsDiffer>
    <experiments>3</experiments>
</comment>
<comment type="interaction">
    <interactant intactId="EBI-2548702">
        <id>Q96DZ9</id>
    </interactant>
    <interactant intactId="EBI-2623095">
        <id>Q9Y371</id>
        <label>SH3GLB1</label>
    </interactant>
    <organismsDiffer>false</organismsDiffer>
    <experiments>3</experiments>
</comment>
<comment type="interaction">
    <interactant intactId="EBI-2548702">
        <id>Q96DZ9</id>
    </interactant>
    <interactant intactId="EBI-352908">
        <id>P34897</id>
        <label>SHMT2</label>
    </interactant>
    <organismsDiffer>false</organismsDiffer>
    <experiments>4</experiments>
</comment>
<comment type="interaction">
    <interactant intactId="EBI-2548702">
        <id>Q96DZ9</id>
    </interactant>
    <interactant intactId="EBI-2822329">
        <id>Q13596</id>
        <label>SNX1</label>
    </interactant>
    <organismsDiffer>false</organismsDiffer>
    <experiments>3</experiments>
</comment>
<comment type="interaction">
    <interactant intactId="EBI-2548702">
        <id>Q96DZ9</id>
    </interactant>
    <interactant intactId="EBI-8635958">
        <id>Q6RVD6</id>
        <label>SPATA8</label>
    </interactant>
    <organismsDiffer>false</organismsDiffer>
    <experiments>3</experiments>
</comment>
<comment type="interaction">
    <interactant intactId="EBI-2548702">
        <id>Q96DZ9</id>
    </interactant>
    <interactant intactId="EBI-742688">
        <id>Q9NZD8</id>
        <label>SPG21</label>
    </interactant>
    <organismsDiffer>false</organismsDiffer>
    <experiments>3</experiments>
</comment>
<comment type="interaction">
    <interactant intactId="EBI-2548702">
        <id>Q96DZ9</id>
    </interactant>
    <interactant intactId="EBI-10295431">
        <id>Q99909</id>
        <label>SSX3</label>
    </interactant>
    <organismsDiffer>false</organismsDiffer>
    <experiments>3</experiments>
</comment>
<comment type="interaction">
    <interactant intactId="EBI-2548702">
        <id>Q96DZ9</id>
    </interactant>
    <interactant intactId="EBI-10176959">
        <id>E5KS60</id>
        <label>SUCLA2</label>
    </interactant>
    <organismsDiffer>false</organismsDiffer>
    <experiments>3</experiments>
</comment>
<comment type="interaction">
    <interactant intactId="EBI-2548702">
        <id>Q96DZ9</id>
    </interactant>
    <interactant intactId="EBI-7131783">
        <id>Q8N205</id>
        <label>SYNE4</label>
    </interactant>
    <organismsDiffer>false</organismsDiffer>
    <experiments>3</experiments>
</comment>
<comment type="interaction">
    <interactant intactId="EBI-2548702">
        <id>Q96DZ9</id>
    </interactant>
    <interactant intactId="EBI-861737">
        <id>O43615</id>
        <label>TIMM44</label>
    </interactant>
    <organismsDiffer>false</organismsDiffer>
    <experiments>3</experiments>
</comment>
<comment type="interaction">
    <interactant intactId="EBI-2548702">
        <id>Q96DZ9</id>
    </interactant>
    <interactant intactId="EBI-932162">
        <id>Q96J77</id>
        <label>TPD52L3</label>
    </interactant>
    <organismsDiffer>false</organismsDiffer>
    <experiments>3</experiments>
</comment>
<comment type="interaction">
    <interactant intactId="EBI-2548702">
        <id>Q96DZ9</id>
    </interactant>
    <interactant intactId="EBI-10210710">
        <id>P49638</id>
        <label>TTPA</label>
    </interactant>
    <organismsDiffer>false</organismsDiffer>
    <experiments>3</experiments>
</comment>
<comment type="interaction">
    <interactant intactId="EBI-2548702">
        <id>Q96DZ9</id>
    </interactant>
    <interactant intactId="EBI-10245038">
        <id>Q5SU16</id>
        <label>TUBB</label>
    </interactant>
    <organismsDiffer>false</organismsDiffer>
    <experiments>3</experiments>
</comment>
<comment type="interaction">
    <interactant intactId="EBI-2548702">
        <id>Q96DZ9</id>
    </interactant>
    <interactant intactId="EBI-10253109">
        <id>Q6P602</id>
        <label>TUBB</label>
    </interactant>
    <organismsDiffer>false</organismsDiffer>
    <experiments>3</experiments>
</comment>
<comment type="interaction">
    <interactant intactId="EBI-2548702">
        <id>Q96DZ9</id>
    </interactant>
    <interactant intactId="EBI-359097">
        <id>P49411</id>
        <label>TUFM</label>
    </interactant>
    <organismsDiffer>false</organismsDiffer>
    <experiments>3</experiments>
</comment>
<comment type="interaction">
    <interactant intactId="EBI-2548702">
        <id>Q96DZ9</id>
    </interactant>
    <interactant intactId="EBI-10244969">
        <id>Q5ST30-3</id>
        <label>VARS2</label>
    </interactant>
    <organismsDiffer>false</organismsDiffer>
    <experiments>3</experiments>
</comment>
<comment type="interaction">
    <interactant intactId="EBI-11522780">
        <id>Q96DZ9-2</id>
    </interactant>
    <interactant intactId="EBI-7131019">
        <id>Q8TB40</id>
        <label>ABHD4</label>
    </interactant>
    <organismsDiffer>false</organismsDiffer>
    <experiments>3</experiments>
</comment>
<comment type="interaction">
    <interactant intactId="EBI-11522780">
        <id>Q96DZ9-2</id>
    </interactant>
    <interactant intactId="EBI-2876502">
        <id>Q96CM8</id>
        <label>ACSF2</label>
    </interactant>
    <organismsDiffer>false</organismsDiffer>
    <experiments>3</experiments>
</comment>
<comment type="interaction">
    <interactant intactId="EBI-11522780">
        <id>Q96DZ9-2</id>
    </interactant>
    <interactant intactId="EBI-2818055">
        <id>Q08AH1</id>
        <label>ACSM1</label>
    </interactant>
    <organismsDiffer>false</organismsDiffer>
    <experiments>3</experiments>
</comment>
<comment type="interaction">
    <interactant intactId="EBI-11522780">
        <id>Q96DZ9-2</id>
    </interactant>
    <interactant intactId="EBI-701692">
        <id>P02647</id>
        <label>APOA1</label>
    </interactant>
    <organismsDiffer>false</organismsDiffer>
    <experiments>6</experiments>
</comment>
<comment type="interaction">
    <interactant intactId="EBI-11522780">
        <id>Q96DZ9-2</id>
    </interactant>
    <interactant intactId="EBI-1222447">
        <id>P06727</id>
        <label>APOA4</label>
    </interactant>
    <organismsDiffer>false</organismsDiffer>
    <experiments>3</experiments>
</comment>
<comment type="interaction">
    <interactant intactId="EBI-11522780">
        <id>Q96DZ9-2</id>
    </interactant>
    <interactant intactId="EBI-3936819">
        <id>Q6Q788</id>
        <label>APOA5</label>
    </interactant>
    <organismsDiffer>false</organismsDiffer>
    <experiments>3</experiments>
</comment>
<comment type="interaction">
    <interactant intactId="EBI-11522780">
        <id>Q96DZ9-2</id>
    </interactant>
    <interactant intactId="EBI-13059134">
        <id>Q13520</id>
        <label>AQP6</label>
    </interactant>
    <organismsDiffer>false</organismsDiffer>
    <experiments>3</experiments>
</comment>
<comment type="interaction">
    <interactant intactId="EBI-11522780">
        <id>Q96DZ9-2</id>
    </interactant>
    <interactant intactId="EBI-2808808">
        <id>P53367</id>
        <label>ARFIP1</label>
    </interactant>
    <organismsDiffer>false</organismsDiffer>
    <experiments>3</experiments>
</comment>
<comment type="interaction">
    <interactant intactId="EBI-11522780">
        <id>Q96DZ9-2</id>
    </interactant>
    <interactant intactId="EBI-638194">
        <id>P53365</id>
        <label>ARFIP2</label>
    </interactant>
    <organismsDiffer>false</organismsDiffer>
    <experiments>3</experiments>
</comment>
<comment type="interaction">
    <interactant intactId="EBI-11522780">
        <id>Q96DZ9-2</id>
    </interactant>
    <interactant intactId="EBI-700794">
        <id>Q13323</id>
        <label>BIK</label>
    </interactant>
    <organismsDiffer>false</organismsDiffer>
    <experiments>3</experiments>
</comment>
<comment type="interaction">
    <interactant intactId="EBI-11522780">
        <id>Q96DZ9-2</id>
    </interactant>
    <interactant intactId="EBI-749464">
        <id>Q12983</id>
        <label>BNIP3</label>
    </interactant>
    <organismsDiffer>false</organismsDiffer>
    <experiments>3</experiments>
</comment>
<comment type="interaction">
    <interactant intactId="EBI-11522780">
        <id>Q96DZ9-2</id>
    </interactant>
    <interactant intactId="EBI-12188723">
        <id>Q96L46</id>
        <label>CAPNS2</label>
    </interactant>
    <organismsDiffer>false</organismsDiffer>
    <experiments>3</experiments>
</comment>
<comment type="interaction">
    <interactant intactId="EBI-11522780">
        <id>Q96DZ9-2</id>
    </interactant>
    <interactant intactId="EBI-4314390">
        <id>O95971</id>
        <label>CD160</label>
    </interactant>
    <organismsDiffer>false</organismsDiffer>
    <experiments>3</experiments>
</comment>
<comment type="interaction">
    <interactant intactId="EBI-11522780">
        <id>Q96DZ9-2</id>
    </interactant>
    <interactant intactId="EBI-525714">
        <id>P25942</id>
        <label>CD40</label>
    </interactant>
    <organismsDiffer>false</organismsDiffer>
    <experiments>3</experiments>
</comment>
<comment type="interaction">
    <interactant intactId="EBI-11522780">
        <id>Q96DZ9-2</id>
    </interactant>
    <interactant intactId="EBI-7797864">
        <id>P11912</id>
        <label>CD79A</label>
    </interactant>
    <organismsDiffer>false</organismsDiffer>
    <experiments>3</experiments>
</comment>
<comment type="interaction">
    <interactant intactId="EBI-11522780">
        <id>Q96DZ9-2</id>
    </interactant>
    <interactant intactId="EBI-740744">
        <id>O95471</id>
        <label>CLDN7</label>
    </interactant>
    <organismsDiffer>false</organismsDiffer>
    <experiments>3</experiments>
</comment>
<comment type="interaction">
    <interactant intactId="EBI-11522780">
        <id>Q96DZ9-2</id>
    </interactant>
    <interactant intactId="EBI-745535">
        <id>Q8NI60</id>
        <label>COQ8A</label>
    </interactant>
    <organismsDiffer>false</organismsDiffer>
    <experiments>6</experiments>
</comment>
<comment type="interaction">
    <interactant intactId="EBI-11522780">
        <id>Q96DZ9-2</id>
    </interactant>
    <interactant intactId="EBI-18013275">
        <id>Q7Z7G2</id>
        <label>CPLX4</label>
    </interactant>
    <organismsDiffer>false</organismsDiffer>
    <experiments>3</experiments>
</comment>
<comment type="interaction">
    <interactant intactId="EBI-11522780">
        <id>Q96DZ9-2</id>
    </interactant>
    <interactant intactId="EBI-10194262">
        <id>P04798</id>
        <label>CYP1A1</label>
    </interactant>
    <organismsDiffer>false</organismsDiffer>
    <experiments>3</experiments>
</comment>
<comment type="interaction">
    <interactant intactId="EBI-11522780">
        <id>Q96DZ9-2</id>
    </interactant>
    <interactant intactId="EBI-2510241">
        <id>Q9BW61</id>
        <label>DDA1</label>
    </interactant>
    <organismsDiffer>false</organismsDiffer>
    <experiments>3</experiments>
</comment>
<comment type="interaction">
    <interactant intactId="EBI-11522780">
        <id>Q96DZ9-2</id>
    </interactant>
    <interactant intactId="EBI-3923585">
        <id>Q8N5I4</id>
        <label>DHRSX</label>
    </interactant>
    <organismsDiffer>false</organismsDiffer>
    <experiments>3</experiments>
</comment>
<comment type="interaction">
    <interactant intactId="EBI-11522780">
        <id>Q96DZ9-2</id>
    </interactant>
    <interactant intactId="EBI-521451">
        <id>Q5VYK3</id>
        <label>ECPAS</label>
    </interactant>
    <organismsDiffer>false</organismsDiffer>
    <experiments>3</experiments>
</comment>
<comment type="interaction">
    <interactant intactId="EBI-11522780">
        <id>Q96DZ9-2</id>
    </interactant>
    <interactant intactId="EBI-18535450">
        <id>Q9GZR5</id>
        <label>ELOVL4</label>
    </interactant>
    <organismsDiffer>false</organismsDiffer>
    <experiments>3</experiments>
</comment>
<comment type="interaction">
    <interactant intactId="EBI-11522780">
        <id>Q96DZ9-2</id>
    </interactant>
    <interactant intactId="EBI-781551">
        <id>Q9Y282</id>
        <label>ERGIC3</label>
    </interactant>
    <organismsDiffer>false</organismsDiffer>
    <experiments>3</experiments>
</comment>
<comment type="interaction">
    <interactant intactId="EBI-11522780">
        <id>Q96DZ9-2</id>
    </interactant>
    <interactant intactId="EBI-2686288">
        <id>Q8IWE2</id>
        <label>FAM114A1</label>
    </interactant>
    <organismsDiffer>false</organismsDiffer>
    <experiments>3</experiments>
</comment>
<comment type="interaction">
    <interactant intactId="EBI-11522780">
        <id>Q96DZ9-2</id>
    </interactant>
    <interactant intactId="EBI-2513774">
        <id>O95363</id>
        <label>FARS2</label>
    </interactant>
    <organismsDiffer>false</organismsDiffer>
    <experiments>3</experiments>
</comment>
<comment type="interaction">
    <interactant intactId="EBI-11522780">
        <id>Q96DZ9-2</id>
    </interactant>
    <interactant intactId="EBI-17187481">
        <id>P12318-2</id>
        <label>FCGR2A</label>
    </interactant>
    <organismsDiffer>false</organismsDiffer>
    <experiments>3</experiments>
</comment>
<comment type="interaction">
    <interactant intactId="EBI-11522780">
        <id>Q96DZ9-2</id>
    </interactant>
    <interactant intactId="EBI-17443171">
        <id>Q96P31-6</id>
        <label>FCRL3</label>
    </interactant>
    <organismsDiffer>false</organismsDiffer>
    <experiments>3</experiments>
</comment>
<comment type="interaction">
    <interactant intactId="EBI-11522780">
        <id>Q96DZ9-2</id>
    </interactant>
    <interactant intactId="EBI-2833872">
        <id>O15552</id>
        <label>FFAR2</label>
    </interactant>
    <organismsDiffer>false</organismsDiffer>
    <experiments>3</experiments>
</comment>
<comment type="interaction">
    <interactant intactId="EBI-11522780">
        <id>Q96DZ9-2</id>
    </interactant>
    <interactant intactId="EBI-12142257">
        <id>Q8TBE3</id>
        <label>FNDC9</label>
    </interactant>
    <organismsDiffer>false</organismsDiffer>
    <experiments>3</experiments>
</comment>
<comment type="interaction">
    <interactant intactId="EBI-11522780">
        <id>Q96DZ9-2</id>
    </interactant>
    <interactant intactId="EBI-16430771">
        <id>A0A0S2Z4D9</id>
        <label>GAD1</label>
    </interactant>
    <organismsDiffer>false</organismsDiffer>
    <experiments>4</experiments>
</comment>
<comment type="interaction">
    <interactant intactId="EBI-11522780">
        <id>Q96DZ9-2</id>
    </interactant>
    <interactant intactId="EBI-743184">
        <id>Q99259</id>
        <label>GAD1</label>
    </interactant>
    <organismsDiffer>false</organismsDiffer>
    <experiments>6</experiments>
</comment>
<comment type="interaction">
    <interactant intactId="EBI-11522780">
        <id>Q96DZ9-2</id>
    </interactant>
    <interactant intactId="EBI-9304251">
        <id>Q05329</id>
        <label>GAD2</label>
    </interactant>
    <organismsDiffer>false</organismsDiffer>
    <experiments>3</experiments>
</comment>
<comment type="interaction">
    <interactant intactId="EBI-11522780">
        <id>Q96DZ9-2</id>
    </interactant>
    <interactant intactId="EBI-17565645">
        <id>P08034</id>
        <label>GJB1</label>
    </interactant>
    <organismsDiffer>false</organismsDiffer>
    <experiments>3</experiments>
</comment>
<comment type="interaction">
    <interactant intactId="EBI-11522780">
        <id>Q96DZ9-2</id>
    </interactant>
    <interactant intactId="EBI-11721746">
        <id>Q8TED1</id>
        <label>GPX8</label>
    </interactant>
    <organismsDiffer>false</organismsDiffer>
    <experiments>3</experiments>
</comment>
<comment type="interaction">
    <interactant intactId="EBI-11522780">
        <id>Q96DZ9-2</id>
    </interactant>
    <interactant intactId="EBI-18053395">
        <id>Q7Z5P4</id>
        <label>HSD17B13</label>
    </interactant>
    <organismsDiffer>false</organismsDiffer>
    <experiments>3</experiments>
</comment>
<comment type="interaction">
    <interactant intactId="EBI-11522780">
        <id>Q96DZ9-2</id>
    </interactant>
    <interactant intactId="EBI-10266796">
        <id>Q8N5M9</id>
        <label>JAGN1</label>
    </interactant>
    <organismsDiffer>false</organismsDiffer>
    <experiments>3</experiments>
</comment>
<comment type="interaction">
    <interactant intactId="EBI-11522780">
        <id>Q96DZ9-2</id>
    </interactant>
    <interactant intactId="EBI-12205593">
        <id>Q8TAC2</id>
        <label>JOSD2</label>
    </interactant>
    <organismsDiffer>false</organismsDiffer>
    <experiments>3</experiments>
</comment>
<comment type="interaction">
    <interactant intactId="EBI-11522780">
        <id>Q96DZ9-2</id>
    </interactant>
    <interactant intactId="EBI-749265">
        <id>Q8N6L0</id>
        <label>KASH5</label>
    </interactant>
    <organismsDiffer>false</organismsDiffer>
    <experiments>3</experiments>
</comment>
<comment type="interaction">
    <interactant intactId="EBI-11522780">
        <id>Q96DZ9-2</id>
    </interactant>
    <interactant intactId="EBI-12017638">
        <id>P48051</id>
        <label>KCNJ6</label>
    </interactant>
    <organismsDiffer>false</organismsDiffer>
    <experiments>3</experiments>
</comment>
<comment type="interaction">
    <interactant intactId="EBI-11522780">
        <id>Q96DZ9-2</id>
    </interactant>
    <interactant intactId="EBI-3934936">
        <id>O95279</id>
        <label>KCNK5</label>
    </interactant>
    <organismsDiffer>false</organismsDiffer>
    <experiments>3</experiments>
</comment>
<comment type="interaction">
    <interactant intactId="EBI-11522780">
        <id>Q96DZ9-2</id>
    </interactant>
    <interactant intactId="EBI-17272405">
        <id>Q8N743</id>
        <label>KIR3DL3</label>
    </interactant>
    <organismsDiffer>false</organismsDiffer>
    <experiments>3</experiments>
</comment>
<comment type="interaction">
    <interactant intactId="EBI-11522780">
        <id>Q96DZ9-2</id>
    </interactant>
    <interactant intactId="EBI-17490413">
        <id>A8MZ59</id>
        <label>LEUTX</label>
    </interactant>
    <organismsDiffer>false</organismsDiffer>
    <experiments>3</experiments>
</comment>
<comment type="interaction">
    <interactant intactId="EBI-11522780">
        <id>Q96DZ9-2</id>
    </interactant>
    <interactant intactId="EBI-739832">
        <id>Q8TBB1</id>
        <label>LNX1</label>
    </interactant>
    <organismsDiffer>false</organismsDiffer>
    <experiments>3</experiments>
</comment>
<comment type="interaction">
    <interactant intactId="EBI-11522780">
        <id>Q96DZ9-2</id>
    </interactant>
    <interactant intactId="EBI-3925442">
        <id>Q9HCJ2</id>
        <label>LRRC4C</label>
    </interactant>
    <organismsDiffer>false</organismsDiffer>
    <experiments>3</experiments>
</comment>
<comment type="interaction">
    <interactant intactId="EBI-11522780">
        <id>Q96DZ9-2</id>
    </interactant>
    <interactant intactId="EBI-358888">
        <id>Q96AG4</id>
        <label>LRRC59</label>
    </interactant>
    <organismsDiffer>false</organismsDiffer>
    <experiments>3</experiments>
</comment>
<comment type="interaction">
    <interactant intactId="EBI-11522780">
        <id>Q96DZ9-2</id>
    </interactant>
    <interactant intactId="EBI-10292326">
        <id>Q96PE7</id>
        <label>MCEE</label>
    </interactant>
    <organismsDiffer>false</organismsDiffer>
    <experiments>6</experiments>
</comment>
<comment type="interaction">
    <interactant intactId="EBI-11522780">
        <id>Q96DZ9-2</id>
    </interactant>
    <interactant intactId="EBI-2816356">
        <id>Q8IX19</id>
        <label>MCEMP1</label>
    </interactant>
    <organismsDiffer>false</organismsDiffer>
    <experiments>3</experiments>
</comment>
<comment type="interaction">
    <interactant intactId="EBI-11522780">
        <id>Q96DZ9-2</id>
    </interactant>
    <interactant intactId="EBI-2689785">
        <id>Q8NI22</id>
        <label>MCFD2</label>
    </interactant>
    <organismsDiffer>false</organismsDiffer>
    <experiments>3</experiments>
</comment>
<comment type="interaction">
    <interactant intactId="EBI-11522780">
        <id>Q96DZ9-2</id>
    </interactant>
    <interactant intactId="EBI-16439278">
        <id>Q6FHY5</id>
        <label>MEOX2</label>
    </interactant>
    <organismsDiffer>false</organismsDiffer>
    <experiments>3</experiments>
</comment>
<comment type="interaction">
    <interactant intactId="EBI-11522780">
        <id>Q96DZ9-2</id>
    </interactant>
    <interactant intactId="EBI-11956541">
        <id>Q9GZY8-5</id>
        <label>MFF</label>
    </interactant>
    <organismsDiffer>false</organismsDiffer>
    <experiments>3</experiments>
</comment>
<comment type="interaction">
    <interactant intactId="EBI-11522780">
        <id>Q96DZ9-2</id>
    </interactant>
    <interactant intactId="EBI-724754">
        <id>O14880</id>
        <label>MGST3</label>
    </interactant>
    <organismsDiffer>false</organismsDiffer>
    <experiments>3</experiments>
</comment>
<comment type="interaction">
    <interactant intactId="EBI-11522780">
        <id>Q96DZ9-2</id>
    </interactant>
    <interactant intactId="EBI-740987">
        <id>Q9NQG6</id>
        <label>MIEF1</label>
    </interactant>
    <organismsDiffer>false</organismsDiffer>
    <experiments>3</experiments>
</comment>
<comment type="interaction">
    <interactant intactId="EBI-11522780">
        <id>Q96DZ9-2</id>
    </interactant>
    <interactant intactId="EBI-5454865">
        <id>Q6IN84</id>
        <label>MRM1</label>
    </interactant>
    <organismsDiffer>false</organismsDiffer>
    <experiments>3</experiments>
</comment>
<comment type="interaction">
    <interactant intactId="EBI-11522780">
        <id>Q96DZ9-2</id>
    </interactant>
    <interactant intactId="EBI-2855755">
        <id>Q96E11</id>
        <label>MRRF</label>
    </interactant>
    <organismsDiffer>false</organismsDiffer>
    <experiments>3</experiments>
</comment>
<comment type="interaction">
    <interactant intactId="EBI-11522780">
        <id>Q96DZ9-2</id>
    </interactant>
    <interactant intactId="EBI-7825321">
        <id>Q96E29</id>
        <label>MTERF3</label>
    </interactant>
    <organismsDiffer>false</organismsDiffer>
    <experiments>3</experiments>
</comment>
<comment type="interaction">
    <interactant intactId="EBI-11522780">
        <id>Q96DZ9-2</id>
    </interactant>
    <interactant intactId="EBI-3923617">
        <id>Q9H2K0</id>
        <label>MTIF3</label>
    </interactant>
    <organismsDiffer>false</organismsDiffer>
    <experiments>3</experiments>
</comment>
<comment type="interaction">
    <interactant intactId="EBI-11522780">
        <id>Q96DZ9-2</id>
    </interactant>
    <interactant intactId="EBI-709754">
        <id>Q9HB07</id>
        <label>MYG1</label>
    </interactant>
    <organismsDiffer>false</organismsDiffer>
    <experiments>3</experiments>
</comment>
<comment type="interaction">
    <interactant intactId="EBI-11522780">
        <id>Q96DZ9-2</id>
    </interactant>
    <interactant intactId="EBI-11978907">
        <id>Q9ULP0-2</id>
        <label>NDRG4</label>
    </interactant>
    <organismsDiffer>false</organismsDiffer>
    <experiments>7</experiments>
</comment>
<comment type="interaction">
    <interactant intactId="EBI-11522780">
        <id>Q96DZ9-2</id>
    </interactant>
    <interactant intactId="EBI-725252">
        <id>Q9UMS0</id>
        <label>NFU1</label>
    </interactant>
    <organismsDiffer>false</organismsDiffer>
    <experiments>3</experiments>
</comment>
<comment type="interaction">
    <interactant intactId="EBI-11522780">
        <id>Q96DZ9-2</id>
    </interactant>
    <interactant intactId="EBI-741158">
        <id>Q96HA8</id>
        <label>NTAQ1</label>
    </interactant>
    <organismsDiffer>false</organismsDiffer>
    <experiments>3</experiments>
</comment>
<comment type="interaction">
    <interactant intactId="EBI-11522780">
        <id>Q96DZ9-2</id>
    </interactant>
    <interactant intactId="EBI-741171">
        <id>Q96AL5</id>
        <label>PBX3</label>
    </interactant>
    <organismsDiffer>false</organismsDiffer>
    <experiments>3</experiments>
</comment>
<comment type="interaction">
    <interactant intactId="EBI-11522780">
        <id>Q96DZ9-2</id>
    </interactant>
    <interactant intactId="EBI-358311">
        <id>P12004</id>
        <label>PCNA</label>
    </interactant>
    <organismsDiffer>false</organismsDiffer>
    <experiments>3</experiments>
</comment>
<comment type="interaction">
    <interactant intactId="EBI-11522780">
        <id>Q96DZ9-2</id>
    </interactant>
    <interactant intactId="EBI-2568609">
        <id>Q9BSJ6</id>
        <label>PIMREG</label>
    </interactant>
    <organismsDiffer>false</organismsDiffer>
    <experiments>3</experiments>
</comment>
<comment type="interaction">
    <interactant intactId="EBI-11522780">
        <id>Q96DZ9-2</id>
    </interactant>
    <interactant intactId="EBI-14223623">
        <id>Q9UKF7-2</id>
        <label>PITPNC1</label>
    </interactant>
    <organismsDiffer>false</organismsDiffer>
    <experiments>3</experiments>
</comment>
<comment type="interaction">
    <interactant intactId="EBI-11522780">
        <id>Q96DZ9-2</id>
    </interactant>
    <interactant intactId="EBI-725795">
        <id>O60664</id>
        <label>PLIN3</label>
    </interactant>
    <organismsDiffer>false</organismsDiffer>
    <experiments>3</experiments>
</comment>
<comment type="interaction">
    <interactant intactId="EBI-11522780">
        <id>Q96DZ9-2</id>
    </interactant>
    <interactant intactId="EBI-11030787">
        <id>Q9NVS9</id>
        <label>PNPO</label>
    </interactant>
    <organismsDiffer>false</organismsDiffer>
    <experiments>3</experiments>
</comment>
<comment type="interaction">
    <interactant intactId="EBI-11522780">
        <id>Q96DZ9-2</id>
    </interactant>
    <interactant intactId="EBI-10320765">
        <id>Q9UGP5-2</id>
        <label>POLL</label>
    </interactant>
    <organismsDiffer>false</organismsDiffer>
    <experiments>3</experiments>
</comment>
<comment type="interaction">
    <interactant intactId="EBI-11522780">
        <id>Q96DZ9-2</id>
    </interactant>
    <interactant intactId="EBI-742898">
        <id>P43378</id>
        <label>PTPN9</label>
    </interactant>
    <organismsDiffer>false</organismsDiffer>
    <experiments>3</experiments>
</comment>
<comment type="interaction">
    <interactant intactId="EBI-11522780">
        <id>Q96DZ9-2</id>
    </interactant>
    <interactant intactId="EBI-3232108">
        <id>Q8N0V3</id>
        <label>RBFA</label>
    </interactant>
    <organismsDiffer>false</organismsDiffer>
    <experiments>3</experiments>
</comment>
<comment type="interaction">
    <interactant intactId="EBI-11522780">
        <id>Q96DZ9-2</id>
    </interactant>
    <interactant intactId="EBI-11337973">
        <id>Q9BRK0</id>
        <label>REEP2</label>
    </interactant>
    <organismsDiffer>false</organismsDiffer>
    <experiments>3</experiments>
</comment>
<comment type="interaction">
    <interactant intactId="EBI-11522780">
        <id>Q96DZ9-2</id>
    </interactant>
    <interactant intactId="EBI-10192441">
        <id>Q86VR2</id>
        <label>RETREG3</label>
    </interactant>
    <organismsDiffer>false</organismsDiffer>
    <experiments>3</experiments>
</comment>
<comment type="interaction">
    <interactant intactId="EBI-11522780">
        <id>Q96DZ9-2</id>
    </interactant>
    <interactant intactId="EBI-9916444">
        <id>Q8TEB9</id>
        <label>RHBDD1</label>
    </interactant>
    <organismsDiffer>false</organismsDiffer>
    <experiments>3</experiments>
</comment>
<comment type="interaction">
    <interactant intactId="EBI-11522780">
        <id>Q96DZ9-2</id>
    </interactant>
    <interactant intactId="EBI-2806908">
        <id>Q96LZ7</id>
        <label>RMDN2</label>
    </interactant>
    <organismsDiffer>false</organismsDiffer>
    <experiments>3</experiments>
</comment>
<comment type="interaction">
    <interactant intactId="EBI-11522780">
        <id>Q96DZ9-2</id>
    </interactant>
    <interactant intactId="EBI-953753">
        <id>Q7L4I2</id>
        <label>RSRC2</label>
    </interactant>
    <organismsDiffer>false</organismsDiffer>
    <experiments>3</experiments>
</comment>
<comment type="interaction">
    <interactant intactId="EBI-11522780">
        <id>Q96DZ9-2</id>
    </interactant>
    <interactant intactId="EBI-8636004">
        <id>Q96GQ5</id>
        <label>RUSF1</label>
    </interactant>
    <organismsDiffer>false</organismsDiffer>
    <experiments>3</experiments>
</comment>
<comment type="interaction">
    <interactant intactId="EBI-11522780">
        <id>Q96DZ9-2</id>
    </interactant>
    <interactant intactId="EBI-3920694">
        <id>Q9NR31</id>
        <label>SAR1A</label>
    </interactant>
    <organismsDiffer>false</organismsDiffer>
    <experiments>3</experiments>
</comment>
<comment type="interaction">
    <interactant intactId="EBI-11522780">
        <id>Q96DZ9-2</id>
    </interactant>
    <interactant intactId="EBI-12823227">
        <id>Q6ZMJ2-2</id>
        <label>SCARA5</label>
    </interactant>
    <organismsDiffer>false</organismsDiffer>
    <experiments>3</experiments>
</comment>
<comment type="interaction">
    <interactant intactId="EBI-11522780">
        <id>Q96DZ9-2</id>
    </interactant>
    <interactant intactId="EBI-727004">
        <id>O00560</id>
        <label>SDCBP</label>
    </interactant>
    <organismsDiffer>false</organismsDiffer>
    <experiments>3</experiments>
</comment>
<comment type="interaction">
    <interactant intactId="EBI-11522780">
        <id>Q96DZ9-2</id>
    </interactant>
    <interactant intactId="EBI-5663627">
        <id>Q16585</id>
        <label>SGCB</label>
    </interactant>
    <organismsDiffer>false</organismsDiffer>
    <experiments>3</experiments>
</comment>
<comment type="interaction">
    <interactant intactId="EBI-11522780">
        <id>Q96DZ9-2</id>
    </interactant>
    <interactant intactId="EBI-697911">
        <id>Q99961</id>
        <label>SH3GL1</label>
    </interactant>
    <organismsDiffer>false</organismsDiffer>
    <experiments>3</experiments>
</comment>
<comment type="interaction">
    <interactant intactId="EBI-11522780">
        <id>Q96DZ9-2</id>
    </interactant>
    <interactant intactId="EBI-2623095">
        <id>Q9Y371</id>
        <label>SH3GLB1</label>
    </interactant>
    <organismsDiffer>false</organismsDiffer>
    <experiments>3</experiments>
</comment>
<comment type="interaction">
    <interactant intactId="EBI-11522780">
        <id>Q96DZ9-2</id>
    </interactant>
    <interactant intactId="EBI-352908">
        <id>P34897</id>
        <label>SHMT2</label>
    </interactant>
    <organismsDiffer>false</organismsDiffer>
    <experiments>3</experiments>
</comment>
<comment type="interaction">
    <interactant intactId="EBI-11522780">
        <id>Q96DZ9-2</id>
    </interactant>
    <interactant intactId="EBI-18159983">
        <id>Q3KNW5</id>
        <label>SLC10A6</label>
    </interactant>
    <organismsDiffer>false</organismsDiffer>
    <experiments>3</experiments>
</comment>
<comment type="interaction">
    <interactant intactId="EBI-11522780">
        <id>Q96DZ9-2</id>
    </interactant>
    <interactant intactId="EBI-18036244">
        <id>Q05940</id>
        <label>SLC18A2</label>
    </interactant>
    <organismsDiffer>false</organismsDiffer>
    <experiments>3</experiments>
</comment>
<comment type="interaction">
    <interactant intactId="EBI-11522780">
        <id>Q96DZ9-2</id>
    </interactant>
    <interactant intactId="EBI-13918058">
        <id>O14863</id>
        <label>SLC30A4</label>
    </interactant>
    <organismsDiffer>false</organismsDiffer>
    <experiments>3</experiments>
</comment>
<comment type="interaction">
    <interactant intactId="EBI-11522780">
        <id>Q96DZ9-2</id>
    </interactant>
    <interactant intactId="EBI-17295964">
        <id>Q9NQQ7-3</id>
        <label>SLC35C2</label>
    </interactant>
    <organismsDiffer>false</organismsDiffer>
    <experiments>3</experiments>
</comment>
<comment type="interaction">
    <interactant intactId="EBI-11522780">
        <id>Q96DZ9-2</id>
    </interactant>
    <interactant intactId="EBI-5235586">
        <id>Q8TBB6</id>
        <label>SLC7A14</label>
    </interactant>
    <organismsDiffer>false</organismsDiffer>
    <experiments>3</experiments>
</comment>
<comment type="interaction">
    <interactant intactId="EBI-11522780">
        <id>Q96DZ9-2</id>
    </interactant>
    <interactant intactId="EBI-2822329">
        <id>Q13596</id>
        <label>SNX1</label>
    </interactant>
    <organismsDiffer>false</organismsDiffer>
    <experiments>3</experiments>
</comment>
<comment type="interaction">
    <interactant intactId="EBI-11522780">
        <id>Q96DZ9-2</id>
    </interactant>
    <interactant intactId="EBI-742688">
        <id>Q9NZD8</id>
        <label>SPG21</label>
    </interactant>
    <organismsDiffer>false</organismsDiffer>
    <experiments>3</experiments>
</comment>
<comment type="interaction">
    <interactant intactId="EBI-11522780">
        <id>Q96DZ9-2</id>
    </interactant>
    <interactant intactId="EBI-10295431">
        <id>Q99909</id>
        <label>SSX3</label>
    </interactant>
    <organismsDiffer>false</organismsDiffer>
    <experiments>3</experiments>
</comment>
<comment type="interaction">
    <interactant intactId="EBI-11522780">
        <id>Q96DZ9-2</id>
    </interactant>
    <interactant intactId="EBI-12033476">
        <id>O60225-2</id>
        <label>SSX5</label>
    </interactant>
    <organismsDiffer>false</organismsDiffer>
    <experiments>3</experiments>
</comment>
<comment type="interaction">
    <interactant intactId="EBI-11522780">
        <id>Q96DZ9-2</id>
    </interactant>
    <interactant intactId="EBI-2800345">
        <id>Q86WV6</id>
        <label>STING1</label>
    </interactant>
    <organismsDiffer>false</organismsDiffer>
    <experiments>3</experiments>
</comment>
<comment type="interaction">
    <interactant intactId="EBI-11522780">
        <id>Q96DZ9-2</id>
    </interactant>
    <interactant intactId="EBI-1211440">
        <id>P27105</id>
        <label>STOM</label>
    </interactant>
    <organismsDiffer>false</organismsDiffer>
    <experiments>3</experiments>
</comment>
<comment type="interaction">
    <interactant intactId="EBI-11522780">
        <id>Q96DZ9-2</id>
    </interactant>
    <interactant intactId="EBI-2269898">
        <id>Q9P2R7</id>
        <label>SUCLA2</label>
    </interactant>
    <organismsDiffer>false</organismsDiffer>
    <experiments>6</experiments>
</comment>
<comment type="interaction">
    <interactant intactId="EBI-11522780">
        <id>Q96DZ9-2</id>
    </interactant>
    <interactant intactId="EBI-10238936">
        <id>Q17RD7</id>
        <label>SYT16</label>
    </interactant>
    <organismsDiffer>false</organismsDiffer>
    <experiments>3</experiments>
</comment>
<comment type="interaction">
    <interactant intactId="EBI-11522780">
        <id>Q96DZ9-2</id>
    </interactant>
    <interactant intactId="EBI-702328">
        <id>Q969Z0</id>
        <label>TBRG4</label>
    </interactant>
    <organismsDiffer>false</organismsDiffer>
    <experiments>3</experiments>
</comment>
<comment type="interaction">
    <interactant intactId="EBI-11522780">
        <id>Q96DZ9-2</id>
    </interactant>
    <interactant intactId="EBI-726691">
        <id>Q8WY91</id>
        <label>THAP4</label>
    </interactant>
    <organismsDiffer>false</organismsDiffer>
    <experiments>3</experiments>
</comment>
<comment type="interaction">
    <interactant intactId="EBI-11522780">
        <id>Q96DZ9-2</id>
    </interactant>
    <interactant intactId="EBI-861737">
        <id>O43615</id>
        <label>TIMM44</label>
    </interactant>
    <organismsDiffer>false</organismsDiffer>
    <experiments>3</experiments>
</comment>
<comment type="interaction">
    <interactant intactId="EBI-11522780">
        <id>Q96DZ9-2</id>
    </interactant>
    <interactant intactId="EBI-12947623">
        <id>Q96MV1</id>
        <label>TLCD4</label>
    </interactant>
    <organismsDiffer>false</organismsDiffer>
    <experiments>3</experiments>
</comment>
<comment type="interaction">
    <interactant intactId="EBI-11522780">
        <id>Q96DZ9-2</id>
    </interactant>
    <interactant intactId="EBI-11603430">
        <id>Q6PL24</id>
        <label>TMED8</label>
    </interactant>
    <organismsDiffer>false</organismsDiffer>
    <experiments>3</experiments>
</comment>
<comment type="interaction">
    <interactant intactId="EBI-11522780">
        <id>Q96DZ9-2</id>
    </interactant>
    <interactant intactId="EBI-7238458">
        <id>Q8IV31</id>
        <label>TMEM139</label>
    </interactant>
    <organismsDiffer>false</organismsDiffer>
    <experiments>3</experiments>
</comment>
<comment type="interaction">
    <interactant intactId="EBI-11522780">
        <id>Q96DZ9-2</id>
    </interactant>
    <interactant intactId="EBI-8638294">
        <id>Q9NUH8</id>
        <label>TMEM14B</label>
    </interactant>
    <organismsDiffer>false</organismsDiffer>
    <experiments>3</experiments>
</comment>
<comment type="interaction">
    <interactant intactId="EBI-11522780">
        <id>Q96DZ9-2</id>
    </interactant>
    <interactant intactId="EBI-11722971">
        <id>Q53FP2</id>
        <label>TMEM35A</label>
    </interactant>
    <organismsDiffer>false</organismsDiffer>
    <experiments>3</experiments>
</comment>
<comment type="interaction">
    <interactant intactId="EBI-11522780">
        <id>Q96DZ9-2</id>
    </interactant>
    <interactant intactId="EBI-11742770">
        <id>Q96HE8</id>
        <label>TMEM80</label>
    </interactant>
    <organismsDiffer>false</organismsDiffer>
    <experiments>3</experiments>
</comment>
<comment type="interaction">
    <interactant intactId="EBI-11522780">
        <id>Q96DZ9-2</id>
    </interactant>
    <interactant intactId="EBI-949763">
        <id>P82094</id>
        <label>TMF1</label>
    </interactant>
    <organismsDiffer>false</organismsDiffer>
    <experiments>3</experiments>
</comment>
<comment type="interaction">
    <interactant intactId="EBI-11522780">
        <id>Q96DZ9-2</id>
    </interactant>
    <interactant intactId="EBI-17678331">
        <id>Q12999</id>
        <label>TSPAN31</label>
    </interactant>
    <organismsDiffer>false</organismsDiffer>
    <experiments>3</experiments>
</comment>
<comment type="interaction">
    <interactant intactId="EBI-11522780">
        <id>Q96DZ9-2</id>
    </interactant>
    <interactant intactId="EBI-10210710">
        <id>P49638</id>
        <label>TTPA</label>
    </interactant>
    <organismsDiffer>false</organismsDiffer>
    <experiments>3</experiments>
</comment>
<comment type="interaction">
    <interactant intactId="EBI-11522780">
        <id>Q96DZ9-2</id>
    </interactant>
    <interactant intactId="EBI-12261790">
        <id>A0A384ME17</id>
        <label>TUFM</label>
    </interactant>
    <organismsDiffer>false</organismsDiffer>
    <experiments>6</experiments>
</comment>
<comment type="subcellular location">
    <subcellularLocation>
        <location>Membrane</location>
        <topology>Multi-pass membrane protein</topology>
    </subcellularLocation>
</comment>
<comment type="alternative products">
    <event type="alternative splicing"/>
    <isoform>
        <id>Q96DZ9-1</id>
        <name>1</name>
        <sequence type="displayed"/>
    </isoform>
    <isoform>
        <id>Q96DZ9-2</id>
        <name>2</name>
        <sequence type="described" ref="VSP_008265"/>
    </isoform>
    <isoform>
        <id>Q96DZ9-3</id>
        <name>3</name>
        <sequence type="described" ref="VSP_008262 VSP_008265"/>
    </isoform>
    <isoform>
        <id>Q96DZ9-4</id>
        <name>4</name>
        <sequence type="described" ref="VSP_008264"/>
    </isoform>
    <isoform>
        <id>Q96DZ9-5</id>
        <name>5</name>
        <sequence type="described" ref="VSP_008263"/>
    </isoform>
    <isoform>
        <id>Q96DZ9-6</id>
        <name>6</name>
        <sequence type="described" ref="VSP_047120"/>
    </isoform>
</comment>
<comment type="tissue specificity">
    <text evidence="3">Highly expressed in the brain.</text>
</comment>
<comment type="similarity">
    <text evidence="7">Belongs to the chemokine-like factor family.</text>
</comment>
<proteinExistence type="evidence at protein level"/>